<evidence type="ECO:0000255" key="1"/>
<evidence type="ECO:0000269" key="2">
    <source>
    </source>
</evidence>
<evidence type="ECO:0000269" key="3">
    <source>
    </source>
</evidence>
<evidence type="ECO:0000305" key="4"/>
<protein>
    <recommendedName>
        <fullName>DNA packaging protein OPG160</fullName>
    </recommendedName>
</protein>
<accession>P68615</accession>
<accession>P21055</accession>
<accession>Q80HU4</accession>
<accession>Q89195</accession>
<organism>
    <name type="scientific">Vaccinia virus (strain Western Reserve)</name>
    <name type="common">VACV</name>
    <name type="synonym">Vaccinia virus (strain WR)</name>
    <dbReference type="NCBI Taxonomy" id="10254"/>
    <lineage>
        <taxon>Viruses</taxon>
        <taxon>Varidnaviria</taxon>
        <taxon>Bamfordvirae</taxon>
        <taxon>Nucleocytoviricota</taxon>
        <taxon>Pokkesviricetes</taxon>
        <taxon>Chitovirales</taxon>
        <taxon>Poxviridae</taxon>
        <taxon>Chordopoxvirinae</taxon>
        <taxon>Orthopoxvirus</taxon>
        <taxon>Vaccinia virus</taxon>
    </lineage>
</organism>
<comment type="function">
    <text evidence="3">Participates in viral DNA packaging and virion morphogenesis.</text>
</comment>
<comment type="subunit">
    <text evidence="2">Interacts with protein OPG137.</text>
</comment>
<comment type="similarity">
    <text evidence="4">Belongs to the orthopoxvirus OPG160 protein family.</text>
</comment>
<proteinExistence type="evidence at protein level"/>
<organismHost>
    <name type="scientific">Bos taurus</name>
    <name type="common">Bovine</name>
    <dbReference type="NCBI Taxonomy" id="9913"/>
</organismHost>
<name>PG160_VACCW</name>
<sequence>MNCFQEKQFSRENLLKMPFRMVLTGGSGSGKTIYLLSLFSTLVKKYKHIFLFTPVYNPDYDGYIWPNHINFVSSQESLEYNLIRTKSNIEKCIAVAQNHKKSAHFLLIFDDVGDKLSKCNTLIEFLNFGRHLNTSIILLCQTYRHVPILGRANITHFCSFNISISDAENMLRSMPVKGKRKDILNMLNMIQTARSNNRLAIIIEDSVFCEGELRICTDTADKDVIEQKLNIDILVNQYSHMKKNLNAILESKKTKLCNSDQSSSSKNVSS</sequence>
<reference key="1">
    <citation type="journal article" date="1991" name="J. Biol. Chem.">
        <title>Identification, sequence, and expression of the gene encoding a Mr 35,000 subunit of the vaccinia virus DNA-dependent RNA polymerase.</title>
        <authorList>
            <person name="Amegadzie B.Y."/>
            <person name="Ahn B.-Y."/>
            <person name="Moss B."/>
        </authorList>
    </citation>
    <scope>NUCLEOTIDE SEQUENCE [GENOMIC DNA]</scope>
</reference>
<reference key="2">
    <citation type="journal article" date="1991" name="J. Gen. Virol.">
        <title>Nucleotide sequence of 42 kbp of vaccinia virus strain WR from near the right inverted terminal repeat.</title>
        <authorList>
            <person name="Smith G.L."/>
            <person name="Chan Y.S."/>
            <person name="Howard S.T."/>
        </authorList>
    </citation>
    <scope>NUCLEOTIDE SEQUENCE [GENOMIC DNA]</scope>
</reference>
<reference key="3">
    <citation type="submission" date="2003-02" db="EMBL/GenBank/DDBJ databases">
        <title>Sequencing of the coding region of Vaccinia-WR to an average 9-fold redundancy and an error rate of 0.16/10kb.</title>
        <authorList>
            <person name="Esposito J.J."/>
            <person name="Frace A.M."/>
            <person name="Sammons S.A."/>
            <person name="Olsen-Rasmussen M."/>
            <person name="Osborne J."/>
            <person name="Wohlhueter R."/>
        </authorList>
    </citation>
    <scope>NUCLEOTIDE SEQUENCE [LARGE SCALE GENOMIC DNA]</scope>
</reference>
<reference key="4">
    <citation type="journal article" date="1993" name="Virus Genes">
        <title>Gene A32 product of vaccinia virus may be an ATPase involved in viral DNA packaging as indicated by sequence comparisons with other putative viral ATPases.</title>
        <authorList>
            <person name="Koonin E.V."/>
            <person name="Senkevich T.G."/>
            <person name="Chernos V.I."/>
        </authorList>
    </citation>
    <scope>POSSIBLE FUNCTION</scope>
</reference>
<reference key="5">
    <citation type="journal article" date="1998" name="J. Virol.">
        <title>DNA packaging mutant: repression of the vaccinia virus A32 gene results in noninfectious, DNA-deficient, spherical, enveloped particles.</title>
        <authorList>
            <person name="Cassetti M.C."/>
            <person name="Merchlinsky M."/>
            <person name="Wolffe E.J."/>
            <person name="Weisberg A.S."/>
            <person name="Moss B."/>
        </authorList>
    </citation>
    <scope>FUNCTION</scope>
</reference>
<reference key="6">
    <citation type="journal article" date="2005" name="J. Virol.">
        <title>Vaccinia virus nonstructural protein encoded by the A11R gene is required for formation of the virion membrane.</title>
        <authorList>
            <person name="Resch W."/>
            <person name="Weisberg A.S."/>
            <person name="Moss B."/>
        </authorList>
    </citation>
    <scope>INTERACTION WITH OPG137</scope>
</reference>
<keyword id="KW-0067">ATP-binding</keyword>
<keyword id="KW-0547">Nucleotide-binding</keyword>
<keyword id="KW-1185">Reference proteome</keyword>
<feature type="chain" id="PRO_0000099314" description="DNA packaging protein OPG160">
    <location>
        <begin position="1"/>
        <end position="270"/>
    </location>
</feature>
<feature type="binding site" evidence="1">
    <location>
        <begin position="55"/>
        <end position="62"/>
    </location>
    <ligand>
        <name>ATP</name>
        <dbReference type="ChEBI" id="CHEBI:30616"/>
    </ligand>
</feature>
<gene>
    <name type="primary">OPG160</name>
    <name type="ordered locus">VACWR155</name>
    <name type="ORF">A32L</name>
</gene>
<dbReference type="EMBL" id="M61187">
    <property type="protein sequence ID" value="AAA48329.1"/>
    <property type="molecule type" value="Genomic_DNA"/>
</dbReference>
<dbReference type="EMBL" id="D11079">
    <property type="protein sequence ID" value="BAA01804.1"/>
    <property type="molecule type" value="Genomic_DNA"/>
</dbReference>
<dbReference type="EMBL" id="X57318">
    <property type="protein sequence ID" value="CAA40582.1"/>
    <property type="molecule type" value="Genomic_DNA"/>
</dbReference>
<dbReference type="EMBL" id="AY243312">
    <property type="protein sequence ID" value="AAO89434.1"/>
    <property type="molecule type" value="Genomic_DNA"/>
</dbReference>
<dbReference type="PIR" id="JQ1768">
    <property type="entry name" value="JQ1768"/>
</dbReference>
<dbReference type="RefSeq" id="YP_233037.1">
    <property type="nucleotide sequence ID" value="NC_006998.1"/>
</dbReference>
<dbReference type="IntAct" id="P68615">
    <property type="interactions" value="2"/>
</dbReference>
<dbReference type="MINT" id="P68615"/>
<dbReference type="DNASU" id="3707685"/>
<dbReference type="GeneID" id="3707685"/>
<dbReference type="KEGG" id="vg:3707685"/>
<dbReference type="Proteomes" id="UP000000344">
    <property type="component" value="Genome"/>
</dbReference>
<dbReference type="GO" id="GO:0005524">
    <property type="term" value="F:ATP binding"/>
    <property type="evidence" value="ECO:0007669"/>
    <property type="project" value="UniProtKB-KW"/>
</dbReference>
<dbReference type="Gene3D" id="3.40.50.300">
    <property type="entry name" value="P-loop containing nucleotide triphosphate hydrolases"/>
    <property type="match status" value="1"/>
</dbReference>
<dbReference type="InterPro" id="IPR006758">
    <property type="entry name" value="A32L"/>
</dbReference>
<dbReference type="InterPro" id="IPR027417">
    <property type="entry name" value="P-loop_NTPase"/>
</dbReference>
<dbReference type="Pfam" id="PF04665">
    <property type="entry name" value="Pox_A32"/>
    <property type="match status" value="1"/>
</dbReference>
<dbReference type="SUPFAM" id="SSF52540">
    <property type="entry name" value="P-loop containing nucleoside triphosphate hydrolases"/>
    <property type="match status" value="1"/>
</dbReference>